<feature type="chain" id="PRO_0000157715" description="UPF0182 protein CTC_00086">
    <location>
        <begin position="1"/>
        <end position="887"/>
    </location>
</feature>
<feature type="transmembrane region" description="Helical" evidence="1">
    <location>
        <begin position="9"/>
        <end position="29"/>
    </location>
</feature>
<feature type="transmembrane region" description="Helical" evidence="1">
    <location>
        <begin position="47"/>
        <end position="67"/>
    </location>
</feature>
<feature type="transmembrane region" description="Helical" evidence="1">
    <location>
        <begin position="87"/>
        <end position="107"/>
    </location>
</feature>
<feature type="transmembrane region" description="Helical" evidence="1">
    <location>
        <begin position="146"/>
        <end position="166"/>
    </location>
</feature>
<feature type="transmembrane region" description="Helical" evidence="1">
    <location>
        <begin position="195"/>
        <end position="215"/>
    </location>
</feature>
<feature type="transmembrane region" description="Helical" evidence="1">
    <location>
        <begin position="242"/>
        <end position="262"/>
    </location>
</feature>
<feature type="transmembrane region" description="Helical" evidence="1">
    <location>
        <begin position="266"/>
        <end position="286"/>
    </location>
</feature>
<keyword id="KW-1003">Cell membrane</keyword>
<keyword id="KW-0472">Membrane</keyword>
<keyword id="KW-1185">Reference proteome</keyword>
<keyword id="KW-0812">Transmembrane</keyword>
<keyword id="KW-1133">Transmembrane helix</keyword>
<evidence type="ECO:0000255" key="1">
    <source>
        <dbReference type="HAMAP-Rule" id="MF_01600"/>
    </source>
</evidence>
<dbReference type="EMBL" id="AE015927">
    <property type="protein sequence ID" value="AAO34739.1"/>
    <property type="molecule type" value="Genomic_DNA"/>
</dbReference>
<dbReference type="RefSeq" id="WP_011098412.1">
    <property type="nucleotide sequence ID" value="NC_004557.1"/>
</dbReference>
<dbReference type="SMR" id="Q899T2"/>
<dbReference type="STRING" id="212717.CTC_00086"/>
<dbReference type="GeneID" id="24254025"/>
<dbReference type="KEGG" id="ctc:CTC_00086"/>
<dbReference type="HOGENOM" id="CLU_007733_0_0_9"/>
<dbReference type="OrthoDB" id="9763654at2"/>
<dbReference type="Proteomes" id="UP000001412">
    <property type="component" value="Chromosome"/>
</dbReference>
<dbReference type="GO" id="GO:0005576">
    <property type="term" value="C:extracellular region"/>
    <property type="evidence" value="ECO:0007669"/>
    <property type="project" value="TreeGrafter"/>
</dbReference>
<dbReference type="GO" id="GO:0005886">
    <property type="term" value="C:plasma membrane"/>
    <property type="evidence" value="ECO:0007669"/>
    <property type="project" value="UniProtKB-SubCell"/>
</dbReference>
<dbReference type="HAMAP" id="MF_01600">
    <property type="entry name" value="UPF0182"/>
    <property type="match status" value="1"/>
</dbReference>
<dbReference type="InterPro" id="IPR005372">
    <property type="entry name" value="UPF0182"/>
</dbReference>
<dbReference type="NCBIfam" id="NF000825">
    <property type="entry name" value="PRK00068.1"/>
    <property type="match status" value="1"/>
</dbReference>
<dbReference type="PANTHER" id="PTHR39344">
    <property type="entry name" value="UPF0182 PROTEIN SLL1060"/>
    <property type="match status" value="1"/>
</dbReference>
<dbReference type="PANTHER" id="PTHR39344:SF1">
    <property type="entry name" value="UPF0182 PROTEIN SLL1060"/>
    <property type="match status" value="1"/>
</dbReference>
<dbReference type="Pfam" id="PF03699">
    <property type="entry name" value="UPF0182"/>
    <property type="match status" value="1"/>
</dbReference>
<sequence>MKKKKVITFIAIIILLLILFLYRSTSFIIDFQWFQELSYTSVFLKEFFTIGKLFTLSFALIFISIWLYYLSLKKNINWQEHNKRKKLMIAFNCIVSSLFAYFFSSKYWYQILQFNNSVPFDIKDPIFNKDISFYIFKLPFLQSIYVLILRVLVFLVIYTLILYFIINLKDKIKEINFRKTLNIKSIKNDVKDFAGKQLAVVSAIILLFLSMGYIIKSRNLVYSPRGLIFGASYTDINISLLIYRIIIIVSFIGSIVVFISIINKKIKPIIISLVLIFLLILSEGATSKLVQTFVVNSNEKKLEEPFVRYNIDYTRKAFDIDDIEEINFDINNNLTAQDIKNNKESIDNIRINSFEPALEFYNQYQTIRPYYIFNDIDIDRYKINGKESQIFISARELNLKAIEPNTWQNRHLIYTHGYGVAMSKVNSVTEEGQPDFSIKDIPQVNNTDILIDNPRIYFGEKTDEYAIINTKLKEFDYPQGANNKITEYDGKSGIKMNLLNKIIFAINKKDLNFLLSRDVTRESRILINRNIVERAKKIAPFLTYDNDPHLVIHDNKLYWVIDAYTTSNKYPYSQPYEDINYIRNSAKVIIDAIDGDINFYITNKNDPIIVSYSKIFKNLFKDYSKIPEGIKEHLKYPEDIFKIQCKVFEKYHMTDTIAFLNGDDLWELSQDEKTMNTDKATNESPYVFMKLPNDNLEEMILLGYFNMKQRNTMSSMLAARMTSDNYGKLIMYRFPIHKTIYSPYFFKQKIKQDPLISKELSLWNIGEGGAKVQFGDTIILPINNSLLYVESMYLRAKGKNSAPEVKGIILSYGDKIVLDTTMDEALTKLFTKKEEGKEENIEDNKINSIKEAKVIYDKAIKAQRDGDWAKYGEYIKKLGNILEYMVK</sequence>
<proteinExistence type="inferred from homology"/>
<organism>
    <name type="scientific">Clostridium tetani (strain Massachusetts / E88)</name>
    <dbReference type="NCBI Taxonomy" id="212717"/>
    <lineage>
        <taxon>Bacteria</taxon>
        <taxon>Bacillati</taxon>
        <taxon>Bacillota</taxon>
        <taxon>Clostridia</taxon>
        <taxon>Eubacteriales</taxon>
        <taxon>Clostridiaceae</taxon>
        <taxon>Clostridium</taxon>
    </lineage>
</organism>
<accession>Q899T2</accession>
<comment type="subcellular location">
    <subcellularLocation>
        <location evidence="1">Cell membrane</location>
        <topology evidence="1">Multi-pass membrane protein</topology>
    </subcellularLocation>
</comment>
<comment type="similarity">
    <text evidence="1">Belongs to the UPF0182 family.</text>
</comment>
<protein>
    <recommendedName>
        <fullName evidence="1">UPF0182 protein CTC_00086</fullName>
    </recommendedName>
</protein>
<reference key="1">
    <citation type="journal article" date="2003" name="Proc. Natl. Acad. Sci. U.S.A.">
        <title>The genome sequence of Clostridium tetani, the causative agent of tetanus disease.</title>
        <authorList>
            <person name="Brueggemann H."/>
            <person name="Baeumer S."/>
            <person name="Fricke W.F."/>
            <person name="Wiezer A."/>
            <person name="Liesegang H."/>
            <person name="Decker I."/>
            <person name="Herzberg C."/>
            <person name="Martinez-Arias R."/>
            <person name="Merkl R."/>
            <person name="Henne A."/>
            <person name="Gottschalk G."/>
        </authorList>
    </citation>
    <scope>NUCLEOTIDE SEQUENCE [LARGE SCALE GENOMIC DNA]</scope>
    <source>
        <strain>Massachusetts / E88</strain>
    </source>
</reference>
<name>Y086_CLOTE</name>
<gene>
    <name type="ordered locus">CTC_00086</name>
</gene>